<dbReference type="EMBL" id="AP006840">
    <property type="protein sequence ID" value="BAD40476.1"/>
    <property type="molecule type" value="Genomic_DNA"/>
</dbReference>
<dbReference type="RefSeq" id="WP_011195621.1">
    <property type="nucleotide sequence ID" value="NC_006177.1"/>
</dbReference>
<dbReference type="SMR" id="Q67PB7"/>
<dbReference type="STRING" id="292459.STH1491"/>
<dbReference type="KEGG" id="sth:STH1491"/>
<dbReference type="eggNOG" id="COG0052">
    <property type="taxonomic scope" value="Bacteria"/>
</dbReference>
<dbReference type="HOGENOM" id="CLU_040318_1_2_9"/>
<dbReference type="OrthoDB" id="9808036at2"/>
<dbReference type="Proteomes" id="UP000000417">
    <property type="component" value="Chromosome"/>
</dbReference>
<dbReference type="GO" id="GO:0022627">
    <property type="term" value="C:cytosolic small ribosomal subunit"/>
    <property type="evidence" value="ECO:0007669"/>
    <property type="project" value="TreeGrafter"/>
</dbReference>
<dbReference type="GO" id="GO:0003735">
    <property type="term" value="F:structural constituent of ribosome"/>
    <property type="evidence" value="ECO:0007669"/>
    <property type="project" value="InterPro"/>
</dbReference>
<dbReference type="GO" id="GO:0006412">
    <property type="term" value="P:translation"/>
    <property type="evidence" value="ECO:0007669"/>
    <property type="project" value="UniProtKB-UniRule"/>
</dbReference>
<dbReference type="CDD" id="cd01425">
    <property type="entry name" value="RPS2"/>
    <property type="match status" value="1"/>
</dbReference>
<dbReference type="FunFam" id="1.10.287.610:FF:000001">
    <property type="entry name" value="30S ribosomal protein S2"/>
    <property type="match status" value="1"/>
</dbReference>
<dbReference type="Gene3D" id="3.40.50.10490">
    <property type="entry name" value="Glucose-6-phosphate isomerase like protein, domain 1"/>
    <property type="match status" value="1"/>
</dbReference>
<dbReference type="Gene3D" id="1.10.287.610">
    <property type="entry name" value="Helix hairpin bin"/>
    <property type="match status" value="1"/>
</dbReference>
<dbReference type="HAMAP" id="MF_00291_B">
    <property type="entry name" value="Ribosomal_uS2_B"/>
    <property type="match status" value="1"/>
</dbReference>
<dbReference type="InterPro" id="IPR001865">
    <property type="entry name" value="Ribosomal_uS2"/>
</dbReference>
<dbReference type="InterPro" id="IPR005706">
    <property type="entry name" value="Ribosomal_uS2_bac/mit/plastid"/>
</dbReference>
<dbReference type="InterPro" id="IPR018130">
    <property type="entry name" value="Ribosomal_uS2_CS"/>
</dbReference>
<dbReference type="InterPro" id="IPR023591">
    <property type="entry name" value="Ribosomal_uS2_flav_dom_sf"/>
</dbReference>
<dbReference type="NCBIfam" id="TIGR01011">
    <property type="entry name" value="rpsB_bact"/>
    <property type="match status" value="1"/>
</dbReference>
<dbReference type="PANTHER" id="PTHR12534">
    <property type="entry name" value="30S RIBOSOMAL PROTEIN S2 PROKARYOTIC AND ORGANELLAR"/>
    <property type="match status" value="1"/>
</dbReference>
<dbReference type="PANTHER" id="PTHR12534:SF0">
    <property type="entry name" value="SMALL RIBOSOMAL SUBUNIT PROTEIN US2M"/>
    <property type="match status" value="1"/>
</dbReference>
<dbReference type="Pfam" id="PF00318">
    <property type="entry name" value="Ribosomal_S2"/>
    <property type="match status" value="1"/>
</dbReference>
<dbReference type="PRINTS" id="PR00395">
    <property type="entry name" value="RIBOSOMALS2"/>
</dbReference>
<dbReference type="SUPFAM" id="SSF52313">
    <property type="entry name" value="Ribosomal protein S2"/>
    <property type="match status" value="1"/>
</dbReference>
<dbReference type="PROSITE" id="PS00962">
    <property type="entry name" value="RIBOSOMAL_S2_1"/>
    <property type="match status" value="1"/>
</dbReference>
<sequence>MSVISMKQLLEAGVHFGHQTRRWNPKMKEYIFTERNGIYIIDLQKTVRMVEIAYNAVRQMAADGGKILFIGTKKQAQDAVREEAERCGMFYVNQRWLGGMLTNFETIKKRIARLNELEEIEGTEYWSKLTKKEQAQLLHEKEKLEKNLGGIKGMKSLPDMAFVIDPRRERIAVSELRKLGIPIVAIVDTNCDPDEIDYVIPGNDDAIRAVKLLTSKIADAVIEGRQGVDTSATVDEEEAEVAEETESMESAEDLDADLIEEEAE</sequence>
<keyword id="KW-1185">Reference proteome</keyword>
<keyword id="KW-0687">Ribonucleoprotein</keyword>
<keyword id="KW-0689">Ribosomal protein</keyword>
<feature type="chain" id="PRO_0000134257" description="Small ribosomal subunit protein uS2">
    <location>
        <begin position="1"/>
        <end position="264"/>
    </location>
</feature>
<feature type="region of interest" description="Disordered" evidence="2">
    <location>
        <begin position="228"/>
        <end position="264"/>
    </location>
</feature>
<feature type="compositionally biased region" description="Acidic residues" evidence="2">
    <location>
        <begin position="234"/>
        <end position="264"/>
    </location>
</feature>
<evidence type="ECO:0000255" key="1">
    <source>
        <dbReference type="HAMAP-Rule" id="MF_00291"/>
    </source>
</evidence>
<evidence type="ECO:0000256" key="2">
    <source>
        <dbReference type="SAM" id="MobiDB-lite"/>
    </source>
</evidence>
<evidence type="ECO:0000305" key="3"/>
<reference key="1">
    <citation type="journal article" date="2004" name="Nucleic Acids Res.">
        <title>Genome sequence of Symbiobacterium thermophilum, an uncultivable bacterium that depends on microbial commensalism.</title>
        <authorList>
            <person name="Ueda K."/>
            <person name="Yamashita A."/>
            <person name="Ishikawa J."/>
            <person name="Shimada M."/>
            <person name="Watsuji T."/>
            <person name="Morimura K."/>
            <person name="Ikeda H."/>
            <person name="Hattori M."/>
            <person name="Beppu T."/>
        </authorList>
    </citation>
    <scope>NUCLEOTIDE SEQUENCE [LARGE SCALE GENOMIC DNA]</scope>
    <source>
        <strain>DSM 24528 / JCM 14929 / IAM 14863 / T</strain>
    </source>
</reference>
<protein>
    <recommendedName>
        <fullName evidence="1">Small ribosomal subunit protein uS2</fullName>
    </recommendedName>
    <alternativeName>
        <fullName evidence="3">30S ribosomal protein S2</fullName>
    </alternativeName>
</protein>
<proteinExistence type="inferred from homology"/>
<accession>Q67PB7</accession>
<organism>
    <name type="scientific">Symbiobacterium thermophilum (strain DSM 24528 / JCM 14929 / IAM 14863 / T)</name>
    <dbReference type="NCBI Taxonomy" id="292459"/>
    <lineage>
        <taxon>Bacteria</taxon>
        <taxon>Bacillati</taxon>
        <taxon>Bacillota</taxon>
        <taxon>Clostridia</taxon>
        <taxon>Eubacteriales</taxon>
        <taxon>Symbiobacteriaceae</taxon>
        <taxon>Symbiobacterium</taxon>
    </lineage>
</organism>
<gene>
    <name evidence="1" type="primary">rpsB</name>
    <name type="ordered locus">STH1491</name>
</gene>
<name>RS2_SYMTH</name>
<comment type="similarity">
    <text evidence="1">Belongs to the universal ribosomal protein uS2 family.</text>
</comment>